<proteinExistence type="inferred from homology"/>
<evidence type="ECO:0000255" key="1">
    <source>
        <dbReference type="HAMAP-Rule" id="MF_03132"/>
    </source>
</evidence>
<comment type="function">
    <text evidence="1">Binds to the 60S ribosomal subunit and prevents its association with the 40S ribosomal subunit to form the 80S initiation complex in the cytoplasm. May also be involved in ribosome biogenesis.</text>
</comment>
<comment type="subunit">
    <text evidence="1">Monomer. Associates with the 60S ribosomal subunit.</text>
</comment>
<comment type="subcellular location">
    <subcellularLocation>
        <location evidence="1">Cytoplasm</location>
    </subcellularLocation>
    <subcellularLocation>
        <location evidence="1">Nucleus</location>
        <location evidence="1">Nucleolus</location>
    </subcellularLocation>
    <text evidence="1">Shuttles between cytoplasm and nucleus/nucleolus.</text>
</comment>
<comment type="similarity">
    <text evidence="1">Belongs to the eIF-6 family.</text>
</comment>
<gene>
    <name evidence="1" type="primary">EIF6</name>
    <name type="ORF">BBOV_III005890</name>
</gene>
<protein>
    <recommendedName>
        <fullName evidence="1">Eukaryotic translation initiation factor 6</fullName>
        <shortName evidence="1">eIF-6</shortName>
    </recommendedName>
</protein>
<name>IF6_BABBO</name>
<sequence>MAIRTQYENSNEVGVFATLTNSYALVSLGSSCNFASVFEAELMPQIPVVQTTIGGTRVVGSVTVGNRKGLLVSSICTDTELRHLRNSLPDSVEIRRIDDRLSALGNVITCNDYVGLIHVDIDRETEEIVEDVLGIEVFRASIAGNVLIGSYCRFQNKGGLVHVKTTTDEMEELSQLLQIPLTSGTVNRGSDVIGGGLIANDWVAFCGMSTTATEIATIERIFQLSRPKEFDPSVSNSHTLRNALIDTLI</sequence>
<keyword id="KW-0963">Cytoplasm</keyword>
<keyword id="KW-0396">Initiation factor</keyword>
<keyword id="KW-0539">Nucleus</keyword>
<keyword id="KW-0648">Protein biosynthesis</keyword>
<keyword id="KW-1185">Reference proteome</keyword>
<keyword id="KW-0690">Ribosome biogenesis</keyword>
<dbReference type="EMBL" id="AAXT02000004">
    <property type="protein sequence ID" value="EDO08151.2"/>
    <property type="molecule type" value="Genomic_DNA"/>
</dbReference>
<dbReference type="RefSeq" id="XP_001611719.1">
    <property type="nucleotide sequence ID" value="XM_001611669.1"/>
</dbReference>
<dbReference type="SMR" id="A7ANL7"/>
<dbReference type="FunCoup" id="A7ANL7">
    <property type="interactions" value="435"/>
</dbReference>
<dbReference type="STRING" id="5865.A7ANL7"/>
<dbReference type="EnsemblProtists" id="EDO08151">
    <property type="protein sequence ID" value="EDO08151"/>
    <property type="gene ID" value="BBOV_III005890"/>
</dbReference>
<dbReference type="VEuPathDB" id="PiroplasmaDB:BBOV_III005890"/>
<dbReference type="eggNOG" id="KOG3185">
    <property type="taxonomic scope" value="Eukaryota"/>
</dbReference>
<dbReference type="InParanoid" id="A7ANL7"/>
<dbReference type="Proteomes" id="UP000002173">
    <property type="component" value="Unassembled WGS sequence"/>
</dbReference>
<dbReference type="GO" id="GO:0005737">
    <property type="term" value="C:cytoplasm"/>
    <property type="evidence" value="ECO:0007669"/>
    <property type="project" value="UniProtKB-SubCell"/>
</dbReference>
<dbReference type="GO" id="GO:0005730">
    <property type="term" value="C:nucleolus"/>
    <property type="evidence" value="ECO:0007669"/>
    <property type="project" value="UniProtKB-SubCell"/>
</dbReference>
<dbReference type="GO" id="GO:0043023">
    <property type="term" value="F:ribosomal large subunit binding"/>
    <property type="evidence" value="ECO:0007669"/>
    <property type="project" value="UniProtKB-UniRule"/>
</dbReference>
<dbReference type="GO" id="GO:0003743">
    <property type="term" value="F:translation initiation factor activity"/>
    <property type="evidence" value="ECO:0007669"/>
    <property type="project" value="UniProtKB-UniRule"/>
</dbReference>
<dbReference type="GO" id="GO:0042256">
    <property type="term" value="P:cytosolic ribosome assembly"/>
    <property type="evidence" value="ECO:0007669"/>
    <property type="project" value="UniProtKB-UniRule"/>
</dbReference>
<dbReference type="GO" id="GO:0042273">
    <property type="term" value="P:ribosomal large subunit biogenesis"/>
    <property type="evidence" value="ECO:0007669"/>
    <property type="project" value="UniProtKB-UniRule"/>
</dbReference>
<dbReference type="CDD" id="cd00527">
    <property type="entry name" value="IF6"/>
    <property type="match status" value="1"/>
</dbReference>
<dbReference type="FunFam" id="3.75.10.10:FF:000006">
    <property type="entry name" value="Eukaryotic translation initiation factor 6"/>
    <property type="match status" value="1"/>
</dbReference>
<dbReference type="Gene3D" id="3.75.10.10">
    <property type="entry name" value="L-arginine/glycine Amidinotransferase, Chain A"/>
    <property type="match status" value="1"/>
</dbReference>
<dbReference type="HAMAP" id="MF_00032">
    <property type="entry name" value="eIF_6"/>
    <property type="match status" value="1"/>
</dbReference>
<dbReference type="InterPro" id="IPR002769">
    <property type="entry name" value="eIF6"/>
</dbReference>
<dbReference type="NCBIfam" id="TIGR00323">
    <property type="entry name" value="eIF-6"/>
    <property type="match status" value="1"/>
</dbReference>
<dbReference type="PANTHER" id="PTHR10784">
    <property type="entry name" value="TRANSLATION INITIATION FACTOR 6"/>
    <property type="match status" value="1"/>
</dbReference>
<dbReference type="Pfam" id="PF01912">
    <property type="entry name" value="eIF-6"/>
    <property type="match status" value="1"/>
</dbReference>
<dbReference type="PIRSF" id="PIRSF006413">
    <property type="entry name" value="IF-6"/>
    <property type="match status" value="1"/>
</dbReference>
<dbReference type="SMART" id="SM00654">
    <property type="entry name" value="eIF6"/>
    <property type="match status" value="1"/>
</dbReference>
<dbReference type="SUPFAM" id="SSF55909">
    <property type="entry name" value="Pentein"/>
    <property type="match status" value="1"/>
</dbReference>
<reference key="1">
    <citation type="journal article" date="2007" name="PLoS Pathog.">
        <title>Genome sequence of Babesia bovis and comparative analysis of apicomplexan hemoprotozoa.</title>
        <authorList>
            <person name="Brayton K.A."/>
            <person name="Lau A.O.T."/>
            <person name="Herndon D.R."/>
            <person name="Hannick L."/>
            <person name="Kappmeyer L.S."/>
            <person name="Berens S.J."/>
            <person name="Bidwell S.L."/>
            <person name="Brown W.C."/>
            <person name="Crabtree J."/>
            <person name="Fadrosh D."/>
            <person name="Feldblum T."/>
            <person name="Forberger H.A."/>
            <person name="Haas B.J."/>
            <person name="Howell J.M."/>
            <person name="Khouri H."/>
            <person name="Koo H."/>
            <person name="Mann D.J."/>
            <person name="Norimine J."/>
            <person name="Paulsen I.T."/>
            <person name="Radune D."/>
            <person name="Ren Q."/>
            <person name="Smith R.K. Jr."/>
            <person name="Suarez C.E."/>
            <person name="White O."/>
            <person name="Wortman J.R."/>
            <person name="Knowles D.P. Jr."/>
            <person name="McElwain T.F."/>
            <person name="Nene V.M."/>
        </authorList>
    </citation>
    <scope>NUCLEOTIDE SEQUENCE [LARGE SCALE GENOMIC DNA]</scope>
    <source>
        <strain>T2Bo</strain>
    </source>
</reference>
<accession>A7ANL7</accession>
<organism>
    <name type="scientific">Babesia bovis</name>
    <dbReference type="NCBI Taxonomy" id="5865"/>
    <lineage>
        <taxon>Eukaryota</taxon>
        <taxon>Sar</taxon>
        <taxon>Alveolata</taxon>
        <taxon>Apicomplexa</taxon>
        <taxon>Aconoidasida</taxon>
        <taxon>Piroplasmida</taxon>
        <taxon>Babesiidae</taxon>
        <taxon>Babesia</taxon>
    </lineage>
</organism>
<feature type="chain" id="PRO_0000402101" description="Eukaryotic translation initiation factor 6">
    <location>
        <begin position="1"/>
        <end position="249"/>
    </location>
</feature>